<keyword id="KW-1185">Reference proteome</keyword>
<keyword id="KW-0346">Stress response</keyword>
<evidence type="ECO:0000250" key="1">
    <source>
        <dbReference type="UniProtKB" id="Q9BPZ7"/>
    </source>
</evidence>
<evidence type="ECO:0000250" key="2">
    <source>
        <dbReference type="UniProtKB" id="Q9V719"/>
    </source>
</evidence>
<evidence type="ECO:0000255" key="3"/>
<evidence type="ECO:0000256" key="4">
    <source>
        <dbReference type="SAM" id="MobiDB-lite"/>
    </source>
</evidence>
<evidence type="ECO:0000305" key="5"/>
<name>SIN1_CAEEL</name>
<feature type="chain" id="PRO_0000331444" description="Stress-activated map kinase-interacting protein 1 homolog">
    <location>
        <begin position="1"/>
        <end position="642"/>
    </location>
</feature>
<feature type="domain" description="CRIM" evidence="3">
    <location>
        <begin position="189"/>
        <end position="314"/>
    </location>
</feature>
<feature type="region of interest" description="Disordered" evidence="4">
    <location>
        <begin position="603"/>
        <end position="642"/>
    </location>
</feature>
<feature type="compositionally biased region" description="Low complexity" evidence="4">
    <location>
        <begin position="605"/>
        <end position="615"/>
    </location>
</feature>
<organism>
    <name type="scientific">Caenorhabditis elegans</name>
    <dbReference type="NCBI Taxonomy" id="6239"/>
    <lineage>
        <taxon>Eukaryota</taxon>
        <taxon>Metazoa</taxon>
        <taxon>Ecdysozoa</taxon>
        <taxon>Nematoda</taxon>
        <taxon>Chromadorea</taxon>
        <taxon>Rhabditida</taxon>
        <taxon>Rhabditina</taxon>
        <taxon>Rhabditomorpha</taxon>
        <taxon>Rhabditoidea</taxon>
        <taxon>Rhabditidae</taxon>
        <taxon>Peloderinae</taxon>
        <taxon>Caenorhabditis</taxon>
    </lineage>
</organism>
<gene>
    <name type="primary">sinh-1</name>
    <name type="ORF">Y57A10A.20</name>
</gene>
<protein>
    <recommendedName>
        <fullName>Stress-activated map kinase-interacting protein 1 homolog</fullName>
    </recommendedName>
</protein>
<reference key="1">
    <citation type="journal article" date="1998" name="Science">
        <title>Genome sequence of the nematode C. elegans: a platform for investigating biology.</title>
        <authorList>
            <consortium name="The C. elegans sequencing consortium"/>
        </authorList>
    </citation>
    <scope>NUCLEOTIDE SEQUENCE [LARGE SCALE GENOMIC DNA]</scope>
    <source>
        <strain>Bristol N2</strain>
    </source>
</reference>
<dbReference type="EMBL" id="BX284602">
    <property type="protein sequence ID" value="CAB55023.3"/>
    <property type="molecule type" value="Genomic_DNA"/>
</dbReference>
<dbReference type="PIR" id="T31640">
    <property type="entry name" value="T31640"/>
</dbReference>
<dbReference type="RefSeq" id="NP_496596.3">
    <property type="nucleotide sequence ID" value="NM_064195.5"/>
</dbReference>
<dbReference type="SMR" id="Q9NA80"/>
<dbReference type="FunCoup" id="Q9NA80">
    <property type="interactions" value="73"/>
</dbReference>
<dbReference type="STRING" id="6239.Y57A10A.20.1"/>
<dbReference type="PaxDb" id="6239-Y57A10A.20"/>
<dbReference type="PeptideAtlas" id="Q9NA80"/>
<dbReference type="EnsemblMetazoa" id="Y57A10A.20.1">
    <property type="protein sequence ID" value="Y57A10A.20.1"/>
    <property type="gene ID" value="WBGene00013261"/>
</dbReference>
<dbReference type="GeneID" id="190339"/>
<dbReference type="KEGG" id="cel:CELE_Y57A10A.20"/>
<dbReference type="UCSC" id="Y57A10A.20">
    <property type="organism name" value="c. elegans"/>
</dbReference>
<dbReference type="AGR" id="WB:WBGene00013261"/>
<dbReference type="CTD" id="190339"/>
<dbReference type="WormBase" id="Y57A10A.20">
    <property type="protein sequence ID" value="CE43373"/>
    <property type="gene ID" value="WBGene00013261"/>
    <property type="gene designation" value="sinh-1"/>
</dbReference>
<dbReference type="eggNOG" id="KOG3739">
    <property type="taxonomic scope" value="Eukaryota"/>
</dbReference>
<dbReference type="GeneTree" id="ENSGT00390000000642"/>
<dbReference type="HOGENOM" id="CLU_015860_0_0_1"/>
<dbReference type="InParanoid" id="Q9NA80"/>
<dbReference type="OMA" id="MLTLKMP"/>
<dbReference type="OrthoDB" id="241990at2759"/>
<dbReference type="Reactome" id="R-CEL-1257604">
    <property type="pathway name" value="PIP3 activates AKT signaling"/>
</dbReference>
<dbReference type="Reactome" id="R-CEL-389357">
    <property type="pathway name" value="CD28 dependent PI3K/Akt signaling"/>
</dbReference>
<dbReference type="Reactome" id="R-CEL-5218920">
    <property type="pathway name" value="VEGFR2 mediated vascular permeability"/>
</dbReference>
<dbReference type="Reactome" id="R-CEL-6804757">
    <property type="pathway name" value="Regulation of TP53 Degradation"/>
</dbReference>
<dbReference type="Reactome" id="R-CEL-9856530">
    <property type="pathway name" value="High laminar flow shear stress activates signaling by PIEZO1 and PECAM1:CDH5:KDR in endothelial cells"/>
</dbReference>
<dbReference type="PRO" id="PR:Q9NA80"/>
<dbReference type="Proteomes" id="UP000001940">
    <property type="component" value="Chromosome II"/>
</dbReference>
<dbReference type="Bgee" id="WBGene00013261">
    <property type="expression patterns" value="Expressed in adult organism and 4 other cell types or tissues"/>
</dbReference>
<dbReference type="GO" id="GO:0005737">
    <property type="term" value="C:cytoplasm"/>
    <property type="evidence" value="ECO:0000318"/>
    <property type="project" value="GO_Central"/>
</dbReference>
<dbReference type="GO" id="GO:0005886">
    <property type="term" value="C:plasma membrane"/>
    <property type="evidence" value="ECO:0000318"/>
    <property type="project" value="GO_Central"/>
</dbReference>
<dbReference type="GO" id="GO:0031932">
    <property type="term" value="C:TORC2 complex"/>
    <property type="evidence" value="ECO:0000318"/>
    <property type="project" value="GO_Central"/>
</dbReference>
<dbReference type="GO" id="GO:0005546">
    <property type="term" value="F:phosphatidylinositol-4,5-bisphosphate binding"/>
    <property type="evidence" value="ECO:0000318"/>
    <property type="project" value="GO_Central"/>
</dbReference>
<dbReference type="GO" id="GO:0048382">
    <property type="term" value="P:mesendoderm development"/>
    <property type="evidence" value="ECO:0000316"/>
    <property type="project" value="WormBase"/>
</dbReference>
<dbReference type="GO" id="GO:0038203">
    <property type="term" value="P:TORC2 signaling"/>
    <property type="evidence" value="ECO:0000318"/>
    <property type="project" value="GO_Central"/>
</dbReference>
<dbReference type="InterPro" id="IPR031567">
    <property type="entry name" value="CRIM_dom"/>
</dbReference>
<dbReference type="InterPro" id="IPR008828">
    <property type="entry name" value="Sin1/Avo1"/>
</dbReference>
<dbReference type="InterPro" id="IPR032679">
    <property type="entry name" value="Sin1_N"/>
</dbReference>
<dbReference type="PANTHER" id="PTHR13335">
    <property type="entry name" value="TARGET OF RAPAMYCIN COMPLEX 2 SUBUNIT MAPKAP1"/>
    <property type="match status" value="1"/>
</dbReference>
<dbReference type="PANTHER" id="PTHR13335:SF1">
    <property type="entry name" value="TARGET OF RAPAMYCIN COMPLEX 2 SUBUNIT MAPKAP1"/>
    <property type="match status" value="1"/>
</dbReference>
<dbReference type="Pfam" id="PF16978">
    <property type="entry name" value="CRIM"/>
    <property type="match status" value="1"/>
</dbReference>
<dbReference type="Pfam" id="PF25322">
    <property type="entry name" value="RBD_SIN1"/>
    <property type="match status" value="1"/>
</dbReference>
<dbReference type="Pfam" id="PF05422">
    <property type="entry name" value="SIN1"/>
    <property type="match status" value="1"/>
</dbReference>
<accession>Q9NA80</accession>
<comment type="function">
    <text evidence="1 2">Component of the target of rapamycin complex 2 (TORC2), which transduces signals from growth factors to pathways involved in proliferation, cytoskeletal organization and anabolic output (By similarity). In response to growth factors, TORC2 phosphorylates and activates AGC protein kinase family members, such as Akt1 (By similarity). Within the TORC2 complex, sinh-1 acts as a substrate adapter which recognizes and binds AGC protein kinase family members for phosphorylation by mTor (By similarity).</text>
</comment>
<comment type="subunit">
    <text evidence="2">Component of the target of rapamycin complex 2 (TORC2).</text>
</comment>
<comment type="similarity">
    <text evidence="5">Belongs to the SIN1 family.</text>
</comment>
<proteinExistence type="inferred from homology"/>
<sequence length="642" mass="72654">MGHVDREDLLNVIRHELRLEDDDGPGLCSRLLLNPDRKCRAGGLPLDFRLKNGDLMDDGDAGFDDIYEIPLYEEPIHTRTLINDSLALRTAEKIKEEGRRDNFYTGPLDELFVKQEVNWPPKTPISTEKSAIERYLEENSANLNNPLGEYSKFAATTTDPSRQIEIIIPMSCDEEIGFKTLKIEVLTTARIREVIGYCLLQYYLTFDSYLPGEVDDYQFYLAEEDGEIEHELPPLDSSKLVGQVGFTCLGLVSRIKKNGNSRQKRAVAVWFVDKDQYVIEVDNMEKPLRWLRDEAFRLREETVKEREPLFQGLLDIKEYYMEAVDNFDVKLDLEASISSARSLEFVMIRKNSSRAGFHPRGGRYGRQMSAMLTLKMPNSPIAAGPMTPLPTVMEESPAVAGTSNGFGFPKAESCGAIASTPGVTWNDDGGQLSSFIVQRIHKFKPKWKANLIFRWTCFEIEKYREDRSAFLPQGYQKHTKVPWEYVGGVRTQLKDAKAGRVDMWQITFFWLPVLSDETVKDVIGDAEWNLNLVAKIYANEEKWRSVTLETFFKQDVDEIFSQTNSILQARDASIYKAFSHSSFGTLSPAASADLALMESAEAIVSPSSDAPSRSSNGKNGGKFRKMSSLMASVMGRRKSDSK</sequence>